<comment type="cofactor">
    <cofactor evidence="1">
        <name>Zn(2+)</name>
        <dbReference type="ChEBI" id="CHEBI:29105"/>
    </cofactor>
    <text evidence="1">Binds 1 zinc ion per subunit.</text>
</comment>
<comment type="subcellular location">
    <subcellularLocation>
        <location evidence="1">Cell inner membrane</location>
        <topology evidence="1">Multi-pass membrane protein</topology>
    </subcellularLocation>
</comment>
<comment type="similarity">
    <text evidence="1">Belongs to the peptidase M48B family.</text>
</comment>
<dbReference type="EC" id="3.4.24.-" evidence="1"/>
<dbReference type="EMBL" id="CP000647">
    <property type="protein sequence ID" value="ABR77771.1"/>
    <property type="molecule type" value="Genomic_DNA"/>
</dbReference>
<dbReference type="RefSeq" id="WP_002911381.1">
    <property type="nucleotide sequence ID" value="NC_009648.1"/>
</dbReference>
<dbReference type="SMR" id="A6TB00"/>
<dbReference type="STRING" id="272620.KPN_02345"/>
<dbReference type="MEROPS" id="M48.002"/>
<dbReference type="PaxDb" id="272620-KPN_02345"/>
<dbReference type="EnsemblBacteria" id="ABR77771">
    <property type="protein sequence ID" value="ABR77771"/>
    <property type="gene ID" value="KPN_02345"/>
</dbReference>
<dbReference type="KEGG" id="kpn:KPN_02345"/>
<dbReference type="HOGENOM" id="CLU_042266_1_0_6"/>
<dbReference type="Proteomes" id="UP000000265">
    <property type="component" value="Chromosome"/>
</dbReference>
<dbReference type="GO" id="GO:0005886">
    <property type="term" value="C:plasma membrane"/>
    <property type="evidence" value="ECO:0007669"/>
    <property type="project" value="UniProtKB-SubCell"/>
</dbReference>
<dbReference type="GO" id="GO:0004222">
    <property type="term" value="F:metalloendopeptidase activity"/>
    <property type="evidence" value="ECO:0007669"/>
    <property type="project" value="UniProtKB-UniRule"/>
</dbReference>
<dbReference type="GO" id="GO:0008270">
    <property type="term" value="F:zinc ion binding"/>
    <property type="evidence" value="ECO:0007669"/>
    <property type="project" value="UniProtKB-UniRule"/>
</dbReference>
<dbReference type="GO" id="GO:0006508">
    <property type="term" value="P:proteolysis"/>
    <property type="evidence" value="ECO:0007669"/>
    <property type="project" value="UniProtKB-KW"/>
</dbReference>
<dbReference type="CDD" id="cd07335">
    <property type="entry name" value="M48B_HtpX_like"/>
    <property type="match status" value="1"/>
</dbReference>
<dbReference type="FunFam" id="3.30.2010.10:FF:000001">
    <property type="entry name" value="Protease HtpX"/>
    <property type="match status" value="1"/>
</dbReference>
<dbReference type="Gene3D" id="3.30.2010.10">
    <property type="entry name" value="Metalloproteases ('zincins'), catalytic domain"/>
    <property type="match status" value="1"/>
</dbReference>
<dbReference type="HAMAP" id="MF_00188">
    <property type="entry name" value="Pept_M48_protease_HtpX"/>
    <property type="match status" value="1"/>
</dbReference>
<dbReference type="InterPro" id="IPR050083">
    <property type="entry name" value="HtpX_protease"/>
</dbReference>
<dbReference type="InterPro" id="IPR022919">
    <property type="entry name" value="Pept_M48_protease_HtpX"/>
</dbReference>
<dbReference type="InterPro" id="IPR001915">
    <property type="entry name" value="Peptidase_M48"/>
</dbReference>
<dbReference type="NCBIfam" id="NF003965">
    <property type="entry name" value="PRK05457.1"/>
    <property type="match status" value="1"/>
</dbReference>
<dbReference type="PANTHER" id="PTHR43221">
    <property type="entry name" value="PROTEASE HTPX"/>
    <property type="match status" value="1"/>
</dbReference>
<dbReference type="PANTHER" id="PTHR43221:SF1">
    <property type="entry name" value="PROTEASE HTPX"/>
    <property type="match status" value="1"/>
</dbReference>
<dbReference type="Pfam" id="PF01435">
    <property type="entry name" value="Peptidase_M48"/>
    <property type="match status" value="1"/>
</dbReference>
<sequence>MMRIALFLLTNLAVMVVFGLVLSLTGIQSSSMTGLLIMALLFGFGGSIVSLMMSKWMALKSVGGEVIEQPRNETERWLMNTVAQQAQQVGIAMPQVAIYHAPDINAFATGARRDASLVAVSTGLLQNMSRDEAEAVIAHEISHIANGDMVTMTLIQGVVNTFVIFISRVIAQIAAGFLGGNREDEGESSNGNPLIYFAVATVLELVFGILASIITMWFSRYREFHADAGSARLVGREKMIAALQRLKTSYEPQEASSMMAFCINGKAKSMSELFMTHPPLDKRIEALRSGEYLK</sequence>
<name>HTPX_KLEP7</name>
<accession>A6TB00</accession>
<organism>
    <name type="scientific">Klebsiella pneumoniae subsp. pneumoniae (strain ATCC 700721 / MGH 78578)</name>
    <dbReference type="NCBI Taxonomy" id="272620"/>
    <lineage>
        <taxon>Bacteria</taxon>
        <taxon>Pseudomonadati</taxon>
        <taxon>Pseudomonadota</taxon>
        <taxon>Gammaproteobacteria</taxon>
        <taxon>Enterobacterales</taxon>
        <taxon>Enterobacteriaceae</taxon>
        <taxon>Klebsiella/Raoultella group</taxon>
        <taxon>Klebsiella</taxon>
        <taxon>Klebsiella pneumoniae complex</taxon>
    </lineage>
</organism>
<keyword id="KW-0997">Cell inner membrane</keyword>
<keyword id="KW-1003">Cell membrane</keyword>
<keyword id="KW-0378">Hydrolase</keyword>
<keyword id="KW-0472">Membrane</keyword>
<keyword id="KW-0479">Metal-binding</keyword>
<keyword id="KW-0482">Metalloprotease</keyword>
<keyword id="KW-0645">Protease</keyword>
<keyword id="KW-0346">Stress response</keyword>
<keyword id="KW-0812">Transmembrane</keyword>
<keyword id="KW-1133">Transmembrane helix</keyword>
<keyword id="KW-0862">Zinc</keyword>
<protein>
    <recommendedName>
        <fullName evidence="1">Protease HtpX</fullName>
        <ecNumber evidence="1">3.4.24.-</ecNumber>
    </recommendedName>
    <alternativeName>
        <fullName evidence="1">Heat shock protein HtpX</fullName>
    </alternativeName>
</protein>
<evidence type="ECO:0000255" key="1">
    <source>
        <dbReference type="HAMAP-Rule" id="MF_00188"/>
    </source>
</evidence>
<proteinExistence type="inferred from homology"/>
<reference key="1">
    <citation type="submission" date="2006-09" db="EMBL/GenBank/DDBJ databases">
        <authorList>
            <consortium name="The Klebsiella pneumonia Genome Sequencing Project"/>
            <person name="McClelland M."/>
            <person name="Sanderson E.K."/>
            <person name="Spieth J."/>
            <person name="Clifton W.S."/>
            <person name="Latreille P."/>
            <person name="Sabo A."/>
            <person name="Pepin K."/>
            <person name="Bhonagiri V."/>
            <person name="Porwollik S."/>
            <person name="Ali J."/>
            <person name="Wilson R.K."/>
        </authorList>
    </citation>
    <scope>NUCLEOTIDE SEQUENCE [LARGE SCALE GENOMIC DNA]</scope>
    <source>
        <strain>ATCC 700721 / MGH 78578</strain>
    </source>
</reference>
<gene>
    <name evidence="1" type="primary">htpX</name>
    <name type="ordered locus">KPN78578_23100</name>
    <name type="ORF">KPN_02345</name>
</gene>
<feature type="chain" id="PRO_1000020876" description="Protease HtpX">
    <location>
        <begin position="1"/>
        <end position="294"/>
    </location>
</feature>
<feature type="transmembrane region" description="Helical" evidence="1">
    <location>
        <begin position="4"/>
        <end position="24"/>
    </location>
</feature>
<feature type="transmembrane region" description="Helical" evidence="1">
    <location>
        <begin position="34"/>
        <end position="52"/>
    </location>
</feature>
<feature type="transmembrane region" description="Helical" evidence="1">
    <location>
        <begin position="158"/>
        <end position="178"/>
    </location>
</feature>
<feature type="transmembrane region" description="Helical" evidence="1">
    <location>
        <begin position="194"/>
        <end position="214"/>
    </location>
</feature>
<feature type="active site" evidence="1">
    <location>
        <position position="140"/>
    </location>
</feature>
<feature type="binding site" evidence="1">
    <location>
        <position position="139"/>
    </location>
    <ligand>
        <name>Zn(2+)</name>
        <dbReference type="ChEBI" id="CHEBI:29105"/>
        <note>catalytic</note>
    </ligand>
</feature>
<feature type="binding site" evidence="1">
    <location>
        <position position="143"/>
    </location>
    <ligand>
        <name>Zn(2+)</name>
        <dbReference type="ChEBI" id="CHEBI:29105"/>
        <note>catalytic</note>
    </ligand>
</feature>
<feature type="binding site" evidence="1">
    <location>
        <position position="223"/>
    </location>
    <ligand>
        <name>Zn(2+)</name>
        <dbReference type="ChEBI" id="CHEBI:29105"/>
        <note>catalytic</note>
    </ligand>
</feature>